<accession>Q03UM2</accession>
<feature type="chain" id="PRO_1000063567" description="3-isopropylmalate dehydratase large subunit">
    <location>
        <begin position="1"/>
        <end position="458"/>
    </location>
</feature>
<feature type="binding site" evidence="1">
    <location>
        <position position="337"/>
    </location>
    <ligand>
        <name>[4Fe-4S] cluster</name>
        <dbReference type="ChEBI" id="CHEBI:49883"/>
    </ligand>
</feature>
<feature type="binding site" evidence="1">
    <location>
        <position position="397"/>
    </location>
    <ligand>
        <name>[4Fe-4S] cluster</name>
        <dbReference type="ChEBI" id="CHEBI:49883"/>
    </ligand>
</feature>
<feature type="binding site" evidence="1">
    <location>
        <position position="400"/>
    </location>
    <ligand>
        <name>[4Fe-4S] cluster</name>
        <dbReference type="ChEBI" id="CHEBI:49883"/>
    </ligand>
</feature>
<protein>
    <recommendedName>
        <fullName evidence="1">3-isopropylmalate dehydratase large subunit</fullName>
        <ecNumber evidence="1">4.2.1.33</ecNumber>
    </recommendedName>
    <alternativeName>
        <fullName evidence="1">Alpha-IPM isomerase</fullName>
        <shortName evidence="1">IPMI</shortName>
    </alternativeName>
    <alternativeName>
        <fullName evidence="1">Isopropylmalate isomerase</fullName>
    </alternativeName>
</protein>
<keyword id="KW-0004">4Fe-4S</keyword>
<keyword id="KW-0028">Amino-acid biosynthesis</keyword>
<keyword id="KW-0100">Branched-chain amino acid biosynthesis</keyword>
<keyword id="KW-0408">Iron</keyword>
<keyword id="KW-0411">Iron-sulfur</keyword>
<keyword id="KW-0432">Leucine biosynthesis</keyword>
<keyword id="KW-0456">Lyase</keyword>
<keyword id="KW-0479">Metal-binding</keyword>
<keyword id="KW-1185">Reference proteome</keyword>
<reference key="1">
    <citation type="journal article" date="2006" name="Proc. Natl. Acad. Sci. U.S.A.">
        <title>Comparative genomics of the lactic acid bacteria.</title>
        <authorList>
            <person name="Makarova K.S."/>
            <person name="Slesarev A."/>
            <person name="Wolf Y.I."/>
            <person name="Sorokin A."/>
            <person name="Mirkin B."/>
            <person name="Koonin E.V."/>
            <person name="Pavlov A."/>
            <person name="Pavlova N."/>
            <person name="Karamychev V."/>
            <person name="Polouchine N."/>
            <person name="Shakhova V."/>
            <person name="Grigoriev I."/>
            <person name="Lou Y."/>
            <person name="Rohksar D."/>
            <person name="Lucas S."/>
            <person name="Huang K."/>
            <person name="Goodstein D.M."/>
            <person name="Hawkins T."/>
            <person name="Plengvidhya V."/>
            <person name="Welker D."/>
            <person name="Hughes J."/>
            <person name="Goh Y."/>
            <person name="Benson A."/>
            <person name="Baldwin K."/>
            <person name="Lee J.-H."/>
            <person name="Diaz-Muniz I."/>
            <person name="Dosti B."/>
            <person name="Smeianov V."/>
            <person name="Wechter W."/>
            <person name="Barabote R."/>
            <person name="Lorca G."/>
            <person name="Altermann E."/>
            <person name="Barrangou R."/>
            <person name="Ganesan B."/>
            <person name="Xie Y."/>
            <person name="Rawsthorne H."/>
            <person name="Tamir D."/>
            <person name="Parker C."/>
            <person name="Breidt F."/>
            <person name="Broadbent J.R."/>
            <person name="Hutkins R."/>
            <person name="O'Sullivan D."/>
            <person name="Steele J."/>
            <person name="Unlu G."/>
            <person name="Saier M.H. Jr."/>
            <person name="Klaenhammer T."/>
            <person name="Richardson P."/>
            <person name="Kozyavkin S."/>
            <person name="Weimer B.C."/>
            <person name="Mills D.A."/>
        </authorList>
    </citation>
    <scope>NUCLEOTIDE SEQUENCE [LARGE SCALE GENOMIC DNA]</scope>
    <source>
        <strain>ATCC 8293 / DSM 20343 / BCRC 11652 / CCM 1803 / JCM 6124 / NCDO 523 / NBRC 100496 / NCIMB 8023 / NCTC 12954 / NRRL B-1118 / 37Y</strain>
    </source>
</reference>
<comment type="function">
    <text evidence="1">Catalyzes the isomerization between 2-isopropylmalate and 3-isopropylmalate, via the formation of 2-isopropylmaleate.</text>
</comment>
<comment type="catalytic activity">
    <reaction evidence="1">
        <text>(2R,3S)-3-isopropylmalate = (2S)-2-isopropylmalate</text>
        <dbReference type="Rhea" id="RHEA:32287"/>
        <dbReference type="ChEBI" id="CHEBI:1178"/>
        <dbReference type="ChEBI" id="CHEBI:35121"/>
        <dbReference type="EC" id="4.2.1.33"/>
    </reaction>
</comment>
<comment type="cofactor">
    <cofactor evidence="1">
        <name>[4Fe-4S] cluster</name>
        <dbReference type="ChEBI" id="CHEBI:49883"/>
    </cofactor>
    <text evidence="1">Binds 1 [4Fe-4S] cluster per subunit.</text>
</comment>
<comment type="pathway">
    <text evidence="1">Amino-acid biosynthesis; L-leucine biosynthesis; L-leucine from 3-methyl-2-oxobutanoate: step 2/4.</text>
</comment>
<comment type="subunit">
    <text evidence="1">Heterodimer of LeuC and LeuD.</text>
</comment>
<comment type="similarity">
    <text evidence="1">Belongs to the aconitase/IPM isomerase family. LeuC type 1 subfamily.</text>
</comment>
<dbReference type="EC" id="4.2.1.33" evidence="1"/>
<dbReference type="EMBL" id="CP000414">
    <property type="protein sequence ID" value="ABJ63100.1"/>
    <property type="molecule type" value="Genomic_DNA"/>
</dbReference>
<dbReference type="RefSeq" id="WP_011680544.1">
    <property type="nucleotide sequence ID" value="NC_008531.1"/>
</dbReference>
<dbReference type="SMR" id="Q03UM2"/>
<dbReference type="EnsemblBacteria" id="ABJ63100">
    <property type="protein sequence ID" value="ABJ63100"/>
    <property type="gene ID" value="LEUM_2030"/>
</dbReference>
<dbReference type="GeneID" id="29577601"/>
<dbReference type="KEGG" id="lme:LEUM_2030"/>
<dbReference type="eggNOG" id="COG0065">
    <property type="taxonomic scope" value="Bacteria"/>
</dbReference>
<dbReference type="HOGENOM" id="CLU_006714_3_4_9"/>
<dbReference type="UniPathway" id="UPA00048">
    <property type="reaction ID" value="UER00071"/>
</dbReference>
<dbReference type="Proteomes" id="UP000000362">
    <property type="component" value="Chromosome"/>
</dbReference>
<dbReference type="GO" id="GO:0003861">
    <property type="term" value="F:3-isopropylmalate dehydratase activity"/>
    <property type="evidence" value="ECO:0007669"/>
    <property type="project" value="UniProtKB-UniRule"/>
</dbReference>
<dbReference type="GO" id="GO:0051539">
    <property type="term" value="F:4 iron, 4 sulfur cluster binding"/>
    <property type="evidence" value="ECO:0007669"/>
    <property type="project" value="UniProtKB-KW"/>
</dbReference>
<dbReference type="GO" id="GO:0046872">
    <property type="term" value="F:metal ion binding"/>
    <property type="evidence" value="ECO:0007669"/>
    <property type="project" value="UniProtKB-KW"/>
</dbReference>
<dbReference type="GO" id="GO:0009098">
    <property type="term" value="P:L-leucine biosynthetic process"/>
    <property type="evidence" value="ECO:0007669"/>
    <property type="project" value="UniProtKB-UniRule"/>
</dbReference>
<dbReference type="CDD" id="cd01583">
    <property type="entry name" value="IPMI"/>
    <property type="match status" value="1"/>
</dbReference>
<dbReference type="Gene3D" id="3.30.499.10">
    <property type="entry name" value="Aconitase, domain 3"/>
    <property type="match status" value="2"/>
</dbReference>
<dbReference type="HAMAP" id="MF_01026">
    <property type="entry name" value="LeuC_type1"/>
    <property type="match status" value="1"/>
</dbReference>
<dbReference type="InterPro" id="IPR004430">
    <property type="entry name" value="3-IsopropMal_deHydase_lsu"/>
</dbReference>
<dbReference type="InterPro" id="IPR015931">
    <property type="entry name" value="Acnase/IPM_dHydase_lsu_aba_1/3"/>
</dbReference>
<dbReference type="InterPro" id="IPR001030">
    <property type="entry name" value="Acoase/IPM_deHydtase_lsu_aba"/>
</dbReference>
<dbReference type="InterPro" id="IPR018136">
    <property type="entry name" value="Aconitase_4Fe-4S_BS"/>
</dbReference>
<dbReference type="InterPro" id="IPR036008">
    <property type="entry name" value="Aconitase_4Fe-4S_dom"/>
</dbReference>
<dbReference type="InterPro" id="IPR050067">
    <property type="entry name" value="IPM_dehydratase_rel_enz"/>
</dbReference>
<dbReference type="InterPro" id="IPR033941">
    <property type="entry name" value="IPMI_cat"/>
</dbReference>
<dbReference type="NCBIfam" id="TIGR00170">
    <property type="entry name" value="leuC"/>
    <property type="match status" value="1"/>
</dbReference>
<dbReference type="NCBIfam" id="NF004016">
    <property type="entry name" value="PRK05478.1"/>
    <property type="match status" value="1"/>
</dbReference>
<dbReference type="NCBIfam" id="NF009116">
    <property type="entry name" value="PRK12466.1"/>
    <property type="match status" value="1"/>
</dbReference>
<dbReference type="PANTHER" id="PTHR43822:SF9">
    <property type="entry name" value="3-ISOPROPYLMALATE DEHYDRATASE"/>
    <property type="match status" value="1"/>
</dbReference>
<dbReference type="PANTHER" id="PTHR43822">
    <property type="entry name" value="HOMOACONITASE, MITOCHONDRIAL-RELATED"/>
    <property type="match status" value="1"/>
</dbReference>
<dbReference type="Pfam" id="PF00330">
    <property type="entry name" value="Aconitase"/>
    <property type="match status" value="1"/>
</dbReference>
<dbReference type="PRINTS" id="PR00415">
    <property type="entry name" value="ACONITASE"/>
</dbReference>
<dbReference type="SUPFAM" id="SSF53732">
    <property type="entry name" value="Aconitase iron-sulfur domain"/>
    <property type="match status" value="1"/>
</dbReference>
<dbReference type="PROSITE" id="PS00450">
    <property type="entry name" value="ACONITASE_1"/>
    <property type="match status" value="1"/>
</dbReference>
<dbReference type="PROSITE" id="PS01244">
    <property type="entry name" value="ACONITASE_2"/>
    <property type="match status" value="1"/>
</dbReference>
<organism>
    <name type="scientific">Leuconostoc mesenteroides subsp. mesenteroides (strain ATCC 8293 / DSM 20343 / BCRC 11652 / CCM 1803 / JCM 6124 / NCDO 523 / NBRC 100496 / NCIMB 8023 / NCTC 12954 / NRRL B-1118 / 37Y)</name>
    <dbReference type="NCBI Taxonomy" id="203120"/>
    <lineage>
        <taxon>Bacteria</taxon>
        <taxon>Bacillati</taxon>
        <taxon>Bacillota</taxon>
        <taxon>Bacilli</taxon>
        <taxon>Lactobacillales</taxon>
        <taxon>Lactobacillaceae</taxon>
        <taxon>Leuconostoc</taxon>
    </lineage>
</organism>
<gene>
    <name evidence="1" type="primary">leuC</name>
    <name type="ordered locus">LEUM_2030</name>
</gene>
<evidence type="ECO:0000255" key="1">
    <source>
        <dbReference type="HAMAP-Rule" id="MF_01026"/>
    </source>
</evidence>
<proteinExistence type="inferred from homology"/>
<sequence length="458" mass="50390">MSKTLFDKIWEKHVITGEIGEAQLIYVDLHLVHEVTSPQPFDGLRSTNRRVRRPDLTFATMDHNVPTKDIFNVQDQMSRLQMDTLVKNTKEFDIPLASIGDDKQGIVHVVGPERGLTQPAKVIVCGDSHTATHGAFGAIAFGIGTSEVEHVLATQTIWQVKPKTMGIKVTGKLPKNTYAKDIIMGIIAKYGVSFGVGYAIEFYGETVENLSMEARMTMCNMSIEAGSRTGMVQPDQTTFDYIEGREQAPKDFESAKNYWSQFYTDDESDFDETLTFDVSNLKPMVTWGTNPGMATPVDQSLPAIKDDNDANAYEYIGLHPNMKPVDINLDYIFIGSCTNSRYEDLEIAANMMKGHHLAPNVTAWVVPGSRAIRNRAIKSGIAQIFEEAGCEWREPGCSACLAMNPDKIPAGKHVASTSNRNFIGRQGAGSRTHLASPAMVAAAGIAGHFVDITTDEFV</sequence>
<name>LEUC_LEUMM</name>